<keyword id="KW-0677">Repeat</keyword>
<keyword id="KW-0687">Ribonucleoprotein</keyword>
<keyword id="KW-0689">Ribosomal protein</keyword>
<keyword id="KW-0694">RNA-binding</keyword>
<accession>Q7A5J0</accession>
<protein>
    <recommendedName>
        <fullName evidence="3">Small ribosomal subunit protein bS1</fullName>
    </recommendedName>
    <alternativeName>
        <fullName>30S ribosomal protein S1</fullName>
    </alternativeName>
</protein>
<evidence type="ECO:0000250" key="1"/>
<evidence type="ECO:0000255" key="2">
    <source>
        <dbReference type="PROSITE-ProRule" id="PRU00180"/>
    </source>
</evidence>
<evidence type="ECO:0000305" key="3"/>
<organism>
    <name type="scientific">Staphylococcus aureus (strain N315)</name>
    <dbReference type="NCBI Taxonomy" id="158879"/>
    <lineage>
        <taxon>Bacteria</taxon>
        <taxon>Bacillati</taxon>
        <taxon>Bacillota</taxon>
        <taxon>Bacilli</taxon>
        <taxon>Bacillales</taxon>
        <taxon>Staphylococcaceae</taxon>
        <taxon>Staphylococcus</taxon>
    </lineage>
</organism>
<proteinExistence type="evidence at protein level"/>
<feature type="chain" id="PRO_0000196049" description="Small ribosomal subunit protein bS1">
    <location>
        <begin position="1"/>
        <end position="391"/>
    </location>
</feature>
<feature type="domain" description="S1 motif 1" evidence="2">
    <location>
        <begin position="16"/>
        <end position="90"/>
    </location>
</feature>
<feature type="domain" description="S1 motif 2" evidence="2">
    <location>
        <begin position="108"/>
        <end position="173"/>
    </location>
</feature>
<feature type="domain" description="S1 motif 3" evidence="2">
    <location>
        <begin position="194"/>
        <end position="262"/>
    </location>
</feature>
<feature type="domain" description="S1 motif 4" evidence="2">
    <location>
        <begin position="279"/>
        <end position="348"/>
    </location>
</feature>
<dbReference type="EMBL" id="BA000018">
    <property type="protein sequence ID" value="BAB42569.1"/>
    <property type="molecule type" value="Genomic_DNA"/>
</dbReference>
<dbReference type="PIR" id="D89926">
    <property type="entry name" value="D89926"/>
</dbReference>
<dbReference type="RefSeq" id="WP_000133961.1">
    <property type="nucleotide sequence ID" value="NC_002745.2"/>
</dbReference>
<dbReference type="SMR" id="Q7A5J0"/>
<dbReference type="EnsemblBacteria" id="BAB42569">
    <property type="protein sequence ID" value="BAB42569"/>
    <property type="gene ID" value="BAB42569"/>
</dbReference>
<dbReference type="KEGG" id="sau:SA1308"/>
<dbReference type="HOGENOM" id="CLU_015805_4_5_9"/>
<dbReference type="GO" id="GO:0022627">
    <property type="term" value="C:cytosolic small ribosomal subunit"/>
    <property type="evidence" value="ECO:0007669"/>
    <property type="project" value="TreeGrafter"/>
</dbReference>
<dbReference type="GO" id="GO:0003729">
    <property type="term" value="F:mRNA binding"/>
    <property type="evidence" value="ECO:0007669"/>
    <property type="project" value="TreeGrafter"/>
</dbReference>
<dbReference type="GO" id="GO:0003735">
    <property type="term" value="F:structural constituent of ribosome"/>
    <property type="evidence" value="ECO:0007669"/>
    <property type="project" value="TreeGrafter"/>
</dbReference>
<dbReference type="GO" id="GO:0006412">
    <property type="term" value="P:translation"/>
    <property type="evidence" value="ECO:0007669"/>
    <property type="project" value="TreeGrafter"/>
</dbReference>
<dbReference type="CDD" id="cd05687">
    <property type="entry name" value="S1_RPS1_repeat_ec1_hs1"/>
    <property type="match status" value="1"/>
</dbReference>
<dbReference type="CDD" id="cd04465">
    <property type="entry name" value="S1_RPS1_repeat_ec2_hs2"/>
    <property type="match status" value="1"/>
</dbReference>
<dbReference type="CDD" id="cd05688">
    <property type="entry name" value="S1_RPS1_repeat_ec3"/>
    <property type="match status" value="1"/>
</dbReference>
<dbReference type="FunFam" id="2.40.50.140:FF:000114">
    <property type="entry name" value="30S ribosomal protein S1"/>
    <property type="match status" value="1"/>
</dbReference>
<dbReference type="FunFam" id="2.40.50.140:FF:000166">
    <property type="entry name" value="30S ribosomal protein S1"/>
    <property type="match status" value="1"/>
</dbReference>
<dbReference type="FunFam" id="2.40.50.140:FF:000182">
    <property type="entry name" value="30S ribosomal protein S1"/>
    <property type="match status" value="1"/>
</dbReference>
<dbReference type="FunFam" id="2.40.50.140:FF:000051">
    <property type="entry name" value="RNA-binding transcriptional accessory protein"/>
    <property type="match status" value="1"/>
</dbReference>
<dbReference type="Gene3D" id="2.40.50.140">
    <property type="entry name" value="Nucleic acid-binding proteins"/>
    <property type="match status" value="4"/>
</dbReference>
<dbReference type="InterPro" id="IPR012340">
    <property type="entry name" value="NA-bd_OB-fold"/>
</dbReference>
<dbReference type="InterPro" id="IPR050437">
    <property type="entry name" value="Ribos_protein_bS1-like"/>
</dbReference>
<dbReference type="InterPro" id="IPR035104">
    <property type="entry name" value="Ribosomal_protein_S1-like"/>
</dbReference>
<dbReference type="InterPro" id="IPR003029">
    <property type="entry name" value="S1_domain"/>
</dbReference>
<dbReference type="NCBIfam" id="NF005208">
    <property type="entry name" value="PRK06676.1"/>
    <property type="match status" value="1"/>
</dbReference>
<dbReference type="PANTHER" id="PTHR10724">
    <property type="entry name" value="30S RIBOSOMAL PROTEIN S1"/>
    <property type="match status" value="1"/>
</dbReference>
<dbReference type="PANTHER" id="PTHR10724:SF7">
    <property type="entry name" value="SMALL RIBOSOMAL SUBUNIT PROTEIN BS1C"/>
    <property type="match status" value="1"/>
</dbReference>
<dbReference type="Pfam" id="PF00575">
    <property type="entry name" value="S1"/>
    <property type="match status" value="4"/>
</dbReference>
<dbReference type="PRINTS" id="PR00681">
    <property type="entry name" value="RIBOSOMALS1"/>
</dbReference>
<dbReference type="SMART" id="SM00316">
    <property type="entry name" value="S1"/>
    <property type="match status" value="4"/>
</dbReference>
<dbReference type="SUPFAM" id="SSF50249">
    <property type="entry name" value="Nucleic acid-binding proteins"/>
    <property type="match status" value="4"/>
</dbReference>
<dbReference type="PROSITE" id="PS50126">
    <property type="entry name" value="S1"/>
    <property type="match status" value="4"/>
</dbReference>
<sequence>MTEEFNESMINDIKEGDKVTGEVQQVEDKQVVVHINGGKFNGIIPISQLSTHHIDSPSEVVKEGDEVEAYVTKVEFDEENETGAYILSRRQLETEKSYSYLQEKLDNNEIIEAKVTEVVKGGLVVDVGQRGFVPASLISTDFIEDFSVFDGQTIRIKVEELDPENNRVILSRKAVEQEENDAKKDQLLQSLNEGDVIHGKVARLTQFGAFIDIGGVDGLVHVSELSHEHVQTPEEVVSIGQDVKVKIKSIDRDTERISLSIKDTLPTPFENIKGQFHENDVIEGVVVRLANFGAFVEIAPGVQGLVHISEIAHKHIGTPGEVLEPGQQVNVKILGIDEENERVSLSIKATLPNEDVVESDPSTTKAYLENEEEDNPTIGDMIGDKLKNLKL</sequence>
<reference key="1">
    <citation type="journal article" date="2001" name="Lancet">
        <title>Whole genome sequencing of meticillin-resistant Staphylococcus aureus.</title>
        <authorList>
            <person name="Kuroda M."/>
            <person name="Ohta T."/>
            <person name="Uchiyama I."/>
            <person name="Baba T."/>
            <person name="Yuzawa H."/>
            <person name="Kobayashi I."/>
            <person name="Cui L."/>
            <person name="Oguchi A."/>
            <person name="Aoki K."/>
            <person name="Nagai Y."/>
            <person name="Lian J.-Q."/>
            <person name="Ito T."/>
            <person name="Kanamori M."/>
            <person name="Matsumaru H."/>
            <person name="Maruyama A."/>
            <person name="Murakami H."/>
            <person name="Hosoyama A."/>
            <person name="Mizutani-Ui Y."/>
            <person name="Takahashi N.K."/>
            <person name="Sawano T."/>
            <person name="Inoue R."/>
            <person name="Kaito C."/>
            <person name="Sekimizu K."/>
            <person name="Hirakawa H."/>
            <person name="Kuhara S."/>
            <person name="Goto S."/>
            <person name="Yabuzaki J."/>
            <person name="Kanehisa M."/>
            <person name="Yamashita A."/>
            <person name="Oshima K."/>
            <person name="Furuya K."/>
            <person name="Yoshino C."/>
            <person name="Shiba T."/>
            <person name="Hattori M."/>
            <person name="Ogasawara N."/>
            <person name="Hayashi H."/>
            <person name="Hiramatsu K."/>
        </authorList>
    </citation>
    <scope>NUCLEOTIDE SEQUENCE [LARGE SCALE GENOMIC DNA]</scope>
    <source>
        <strain>N315</strain>
    </source>
</reference>
<reference key="2">
    <citation type="journal article" date="2005" name="J. Microbiol. Methods">
        <title>Correlation of proteomic and transcriptomic profiles of Staphylococcus aureus during the post-exponential phase of growth.</title>
        <authorList>
            <person name="Scherl A."/>
            <person name="Francois P."/>
            <person name="Bento M."/>
            <person name="Deshusses J.M."/>
            <person name="Charbonnier Y."/>
            <person name="Converset V."/>
            <person name="Huyghe A."/>
            <person name="Walter N."/>
            <person name="Hoogland C."/>
            <person name="Appel R.D."/>
            <person name="Sanchez J.-C."/>
            <person name="Zimmermann-Ivol C.G."/>
            <person name="Corthals G.L."/>
            <person name="Hochstrasser D.F."/>
            <person name="Schrenzel J."/>
        </authorList>
    </citation>
    <scope>IDENTIFICATION BY MASS SPECTROMETRY</scope>
    <source>
        <strain>N315</strain>
    </source>
</reference>
<reference key="3">
    <citation type="submission" date="2007-10" db="UniProtKB">
        <title>Shotgun proteomic analysis of total and membrane protein extracts of S. aureus strain N315.</title>
        <authorList>
            <person name="Vaezzadeh A.R."/>
            <person name="Deshusses J."/>
            <person name="Lescuyer P."/>
            <person name="Hochstrasser D.F."/>
        </authorList>
    </citation>
    <scope>IDENTIFICATION BY MASS SPECTROMETRY [LARGE SCALE ANALYSIS]</scope>
    <source>
        <strain>N315</strain>
    </source>
</reference>
<comment type="function">
    <text evidence="1">Binds mRNA; thus facilitating recognition of the initiation point. It is needed to translate mRNA with a short Shine-Dalgarno (SD) purine-rich sequence (By similarity).</text>
</comment>
<comment type="similarity">
    <text evidence="3">Belongs to the bacterial ribosomal protein bS1 family.</text>
</comment>
<name>RS1_STAAN</name>
<gene>
    <name type="primary">rpsA</name>
    <name type="ordered locus">SA1308</name>
</gene>